<evidence type="ECO:0000250" key="1"/>
<evidence type="ECO:0000255" key="2"/>
<evidence type="ECO:0000305" key="3"/>
<organism>
    <name type="scientific">Cymbidium mosaic virus (strain Singapore)</name>
    <dbReference type="NCBI Taxonomy" id="31725"/>
    <lineage>
        <taxon>Viruses</taxon>
        <taxon>Riboviria</taxon>
        <taxon>Orthornavirae</taxon>
        <taxon>Kitrinoviricota</taxon>
        <taxon>Alsuviricetes</taxon>
        <taxon>Tymovirales</taxon>
        <taxon>Alphaflexiviridae</taxon>
        <taxon>Potexvirus</taxon>
        <taxon>Cymbidium mosaic virus</taxon>
    </lineage>
</organism>
<comment type="function">
    <text evidence="1">Plays a role in viral cell-to-cell propagation, by facilitating genome transport to neighboring plant cells through plasmosdesmata. May induce the formation of granular vesicles derived from the Endoplasmic reticulum, which align on actin filaments (By similarity).</text>
</comment>
<comment type="subcellular location">
    <subcellularLocation>
        <location evidence="1">Host endoplasmic reticulum membrane</location>
    </subcellularLocation>
</comment>
<comment type="miscellaneous">
    <text>TGBp1, TGBp2 and TGBp3 seem to act together for cell-to-cell propagation. TGBp1 is the main movement protein that physically cross the plasmodesma with the viral genome. TGBp2 and TGBp3 would facilitate TGBp1 function.</text>
</comment>
<comment type="similarity">
    <text evidence="3">Belongs to the Tymovirales TGBp3 protein family.</text>
</comment>
<dbReference type="EMBL" id="X62663">
    <property type="protein sequence ID" value="CAA44530.1"/>
    <property type="molecule type" value="Genomic_RNA"/>
</dbReference>
<dbReference type="PIR" id="S20927">
    <property type="entry name" value="WMWG10"/>
</dbReference>
<dbReference type="SMR" id="Q00478"/>
<dbReference type="GO" id="GO:0044167">
    <property type="term" value="C:host cell endoplasmic reticulum membrane"/>
    <property type="evidence" value="ECO:0007669"/>
    <property type="project" value="UniProtKB-SubCell"/>
</dbReference>
<dbReference type="GO" id="GO:0016020">
    <property type="term" value="C:membrane"/>
    <property type="evidence" value="ECO:0007669"/>
    <property type="project" value="UniProtKB-KW"/>
</dbReference>
<dbReference type="GO" id="GO:0046740">
    <property type="term" value="P:transport of virus in host, cell to cell"/>
    <property type="evidence" value="ECO:0007669"/>
    <property type="project" value="UniProtKB-KW"/>
</dbReference>
<dbReference type="InterPro" id="IPR003411">
    <property type="entry name" value="TGBp3"/>
</dbReference>
<dbReference type="Pfam" id="PF02495">
    <property type="entry name" value="TGBp3"/>
    <property type="match status" value="1"/>
</dbReference>
<sequence>MLGTRNIPTTSGLPLPPPSSSLSAYIFPTILAIIFAVFALVAIHITTPEPFCTIHIDGASITITNCPDPAAILNKVAIGPWRGLSYHNNLK</sequence>
<accession>Q00478</accession>
<protein>
    <recommendedName>
        <fullName>Movement protein TGBp3</fullName>
    </recommendedName>
    <alternativeName>
        <fullName>9.7 kDa protein</fullName>
    </alternativeName>
    <alternativeName>
        <fullName>Triple gene block 3 protein</fullName>
        <shortName>TGBp3</shortName>
    </alternativeName>
</protein>
<keyword id="KW-1038">Host endoplasmic reticulum</keyword>
<keyword id="KW-1043">Host membrane</keyword>
<keyword id="KW-0472">Membrane</keyword>
<keyword id="KW-0812">Transmembrane</keyword>
<keyword id="KW-1133">Transmembrane helix</keyword>
<keyword id="KW-0813">Transport</keyword>
<keyword id="KW-0916">Viral movement protein</keyword>
<feature type="chain" id="PRO_0000222600" description="Movement protein TGBp3">
    <location>
        <begin position="1"/>
        <end position="91"/>
    </location>
</feature>
<feature type="topological domain" description="Lumenal" evidence="2">
    <location>
        <begin position="1"/>
        <end position="23"/>
    </location>
</feature>
<feature type="transmembrane region" description="Helical" evidence="2">
    <location>
        <begin position="24"/>
        <end position="46"/>
    </location>
</feature>
<feature type="topological domain" description="Cytoplasmic" evidence="2">
    <location>
        <begin position="47"/>
        <end position="91"/>
    </location>
</feature>
<reference key="1">
    <citation type="journal article" date="1992" name="Plant Mol. Biol.">
        <title>Nucleotide sequences of the two ORFs upstream to the coat protein gene of cymbidium mosaic virus.</title>
        <authorList>
            <person name="Neo K.K."/>
            <person name="Wong S.M."/>
            <person name="Wu M."/>
        </authorList>
    </citation>
    <scope>NUCLEOTIDE SEQUENCE [GENOMIC RNA]</scope>
</reference>
<reference key="2">
    <citation type="journal article" date="2005" name="Mol. Plant Microbe Interact.">
        <title>A new cell-to-cell transport model for Potexviruses.</title>
        <authorList>
            <person name="Verchot-Lubicz J."/>
        </authorList>
    </citation>
    <scope>REVIEW</scope>
</reference>
<name>TGB3_CMVSI</name>
<gene>
    <name type="ORF">ORF4</name>
</gene>
<proteinExistence type="inferred from homology"/>
<organismHost>
    <name type="scientific">Cattleya</name>
    <dbReference type="NCBI Taxonomy" id="38236"/>
</organismHost>
<organismHost>
    <name type="scientific">Coelogyne imbricata</name>
    <dbReference type="NCBI Taxonomy" id="141750"/>
</organismHost>
<organismHost>
    <name type="scientific">Cymbidium aloifolium</name>
    <dbReference type="NCBI Taxonomy" id="112603"/>
</organismHost>
<organismHost>
    <name type="scientific">Cymbidium hybrid cultivar</name>
    <dbReference type="NCBI Taxonomy" id="28471"/>
</organismHost>
<organismHost>
    <name type="scientific">Cymbidium iridioides</name>
    <dbReference type="NCBI Taxonomy" id="160533"/>
</organismHost>
<organismHost>
    <name type="scientific">Epidendrum</name>
    <dbReference type="NCBI Taxonomy" id="38234"/>
</organismHost>
<organismHost>
    <name type="scientific">Laelia</name>
    <dbReference type="NCBI Taxonomy" id="123155"/>
</organismHost>
<organismHost>
    <name type="scientific">Oncidium</name>
    <dbReference type="NCBI Taxonomy" id="45173"/>
</organismHost>
<organismHost>
    <name type="scientific">Phaius tancarvilleae</name>
    <name type="common">Nun's hood orchid</name>
    <name type="synonym">Greater swamp orchid</name>
    <dbReference type="NCBI Taxonomy" id="120015"/>
</organismHost>
<organismHost>
    <name type="scientific">Phalaenopsis</name>
    <dbReference type="NCBI Taxonomy" id="36459"/>
</organismHost>
<organismHost>
    <name type="scientific">Vanda</name>
    <dbReference type="NCBI Taxonomy" id="38198"/>
</organismHost>
<organismHost>
    <name type="scientific">Zygopetalum</name>
    <dbReference type="NCBI Taxonomy" id="78858"/>
</organismHost>